<sequence>MEMVRPAARRSVGETQPPLPSIYSLTLDELKEWLVAQGEKPFRATQIYEWLYQNRVTDFADMTNLPKRLREQLASSFSITTLKTVVKQTSKDGTIKFLFELHDGYSIETVLMRHNYGNSVCVTTQVGCRIGCTFCASTLGGLKRHLEAGEIVAQVVQVQKALDDTNERVSSIVVMGIGEPFDNYDALIKFLRIVNHPKGLNIGARHITVSTSGIIPKIYQFADEGMQINFAISLHAPTNELRTKLMPINKAYPLPKLMEAVRYYIEKTGRRVTFEYGLFGGVNDQLEHAEQLAELIKGLKCHVNLIPVNYVPERNYVRTPRSQIFAFERALKKHGINVTIRREHGHDIDAACGQLRAKERKEETR</sequence>
<evidence type="ECO:0000255" key="1">
    <source>
        <dbReference type="HAMAP-Rule" id="MF_01849"/>
    </source>
</evidence>
<evidence type="ECO:0000255" key="2">
    <source>
        <dbReference type="PROSITE-ProRule" id="PRU01266"/>
    </source>
</evidence>
<gene>
    <name evidence="1" type="primary">rlmN</name>
    <name type="ordered locus">GK1174</name>
</gene>
<protein>
    <recommendedName>
        <fullName evidence="1">Probable dual-specificity RNA methyltransferase RlmN</fullName>
        <ecNumber evidence="1">2.1.1.192</ecNumber>
    </recommendedName>
    <alternativeName>
        <fullName evidence="1">23S rRNA (adenine(2503)-C(2))-methyltransferase</fullName>
    </alternativeName>
    <alternativeName>
        <fullName evidence="1">23S rRNA m2A2503 methyltransferase</fullName>
    </alternativeName>
    <alternativeName>
        <fullName evidence="1">Ribosomal RNA large subunit methyltransferase N</fullName>
    </alternativeName>
    <alternativeName>
        <fullName evidence="1">tRNA (adenine(37)-C(2))-methyltransferase</fullName>
    </alternativeName>
    <alternativeName>
        <fullName evidence="1">tRNA m2A37 methyltransferase</fullName>
    </alternativeName>
</protein>
<keyword id="KW-0004">4Fe-4S</keyword>
<keyword id="KW-0963">Cytoplasm</keyword>
<keyword id="KW-1015">Disulfide bond</keyword>
<keyword id="KW-0408">Iron</keyword>
<keyword id="KW-0411">Iron-sulfur</keyword>
<keyword id="KW-0479">Metal-binding</keyword>
<keyword id="KW-0489">Methyltransferase</keyword>
<keyword id="KW-1185">Reference proteome</keyword>
<keyword id="KW-0698">rRNA processing</keyword>
<keyword id="KW-0949">S-adenosyl-L-methionine</keyword>
<keyword id="KW-0808">Transferase</keyword>
<keyword id="KW-0819">tRNA processing</keyword>
<accession>Q5L0S1</accession>
<dbReference type="EC" id="2.1.1.192" evidence="1"/>
<dbReference type="EMBL" id="BA000043">
    <property type="protein sequence ID" value="BAD75459.1"/>
    <property type="molecule type" value="Genomic_DNA"/>
</dbReference>
<dbReference type="RefSeq" id="WP_011230674.1">
    <property type="nucleotide sequence ID" value="NC_006510.1"/>
</dbReference>
<dbReference type="SMR" id="Q5L0S1"/>
<dbReference type="STRING" id="235909.GK1174"/>
<dbReference type="GeneID" id="32063067"/>
<dbReference type="KEGG" id="gka:GK1174"/>
<dbReference type="eggNOG" id="COG0820">
    <property type="taxonomic scope" value="Bacteria"/>
</dbReference>
<dbReference type="HOGENOM" id="CLU_029101_0_1_9"/>
<dbReference type="Proteomes" id="UP000001172">
    <property type="component" value="Chromosome"/>
</dbReference>
<dbReference type="GO" id="GO:0005737">
    <property type="term" value="C:cytoplasm"/>
    <property type="evidence" value="ECO:0007669"/>
    <property type="project" value="UniProtKB-SubCell"/>
</dbReference>
<dbReference type="GO" id="GO:0051539">
    <property type="term" value="F:4 iron, 4 sulfur cluster binding"/>
    <property type="evidence" value="ECO:0007669"/>
    <property type="project" value="UniProtKB-UniRule"/>
</dbReference>
<dbReference type="GO" id="GO:0046872">
    <property type="term" value="F:metal ion binding"/>
    <property type="evidence" value="ECO:0007669"/>
    <property type="project" value="UniProtKB-KW"/>
</dbReference>
<dbReference type="GO" id="GO:0070040">
    <property type="term" value="F:rRNA (adenine(2503)-C2-)-methyltransferase activity"/>
    <property type="evidence" value="ECO:0007669"/>
    <property type="project" value="UniProtKB-UniRule"/>
</dbReference>
<dbReference type="GO" id="GO:0019843">
    <property type="term" value="F:rRNA binding"/>
    <property type="evidence" value="ECO:0007669"/>
    <property type="project" value="UniProtKB-UniRule"/>
</dbReference>
<dbReference type="GO" id="GO:0002935">
    <property type="term" value="F:tRNA (adenine(37)-C2)-methyltransferase activity"/>
    <property type="evidence" value="ECO:0007669"/>
    <property type="project" value="UniProtKB-UniRule"/>
</dbReference>
<dbReference type="GO" id="GO:0000049">
    <property type="term" value="F:tRNA binding"/>
    <property type="evidence" value="ECO:0007669"/>
    <property type="project" value="UniProtKB-UniRule"/>
</dbReference>
<dbReference type="GO" id="GO:0070475">
    <property type="term" value="P:rRNA base methylation"/>
    <property type="evidence" value="ECO:0007669"/>
    <property type="project" value="UniProtKB-UniRule"/>
</dbReference>
<dbReference type="GO" id="GO:0030488">
    <property type="term" value="P:tRNA methylation"/>
    <property type="evidence" value="ECO:0007669"/>
    <property type="project" value="UniProtKB-UniRule"/>
</dbReference>
<dbReference type="CDD" id="cd01335">
    <property type="entry name" value="Radical_SAM"/>
    <property type="match status" value="1"/>
</dbReference>
<dbReference type="FunFam" id="3.20.20.70:FF:000014">
    <property type="entry name" value="Probable dual-specificity RNA methyltransferase RlmN"/>
    <property type="match status" value="1"/>
</dbReference>
<dbReference type="Gene3D" id="1.10.150.530">
    <property type="match status" value="1"/>
</dbReference>
<dbReference type="Gene3D" id="3.20.20.70">
    <property type="entry name" value="Aldolase class I"/>
    <property type="match status" value="1"/>
</dbReference>
<dbReference type="HAMAP" id="MF_01849">
    <property type="entry name" value="RNA_methyltr_RlmN"/>
    <property type="match status" value="1"/>
</dbReference>
<dbReference type="InterPro" id="IPR013785">
    <property type="entry name" value="Aldolase_TIM"/>
</dbReference>
<dbReference type="InterPro" id="IPR040072">
    <property type="entry name" value="Methyltransferase_A"/>
</dbReference>
<dbReference type="InterPro" id="IPR048641">
    <property type="entry name" value="RlmN_N"/>
</dbReference>
<dbReference type="InterPro" id="IPR027492">
    <property type="entry name" value="RNA_MTrfase_RlmN"/>
</dbReference>
<dbReference type="InterPro" id="IPR004383">
    <property type="entry name" value="rRNA_lsu_MTrfase_RlmN/Cfr"/>
</dbReference>
<dbReference type="InterPro" id="IPR007197">
    <property type="entry name" value="rSAM"/>
</dbReference>
<dbReference type="NCBIfam" id="TIGR00048">
    <property type="entry name" value="rRNA_mod_RlmN"/>
    <property type="match status" value="1"/>
</dbReference>
<dbReference type="PANTHER" id="PTHR30544">
    <property type="entry name" value="23S RRNA METHYLTRANSFERASE"/>
    <property type="match status" value="1"/>
</dbReference>
<dbReference type="PANTHER" id="PTHR30544:SF5">
    <property type="entry name" value="RADICAL SAM CORE DOMAIN-CONTAINING PROTEIN"/>
    <property type="match status" value="1"/>
</dbReference>
<dbReference type="Pfam" id="PF04055">
    <property type="entry name" value="Radical_SAM"/>
    <property type="match status" value="1"/>
</dbReference>
<dbReference type="Pfam" id="PF21016">
    <property type="entry name" value="RlmN_N"/>
    <property type="match status" value="1"/>
</dbReference>
<dbReference type="PIRSF" id="PIRSF006004">
    <property type="entry name" value="CHP00048"/>
    <property type="match status" value="1"/>
</dbReference>
<dbReference type="SFLD" id="SFLDF00275">
    <property type="entry name" value="adenosine_C2_methyltransferase"/>
    <property type="match status" value="1"/>
</dbReference>
<dbReference type="SFLD" id="SFLDS00029">
    <property type="entry name" value="Radical_SAM"/>
    <property type="match status" value="1"/>
</dbReference>
<dbReference type="SUPFAM" id="SSF102114">
    <property type="entry name" value="Radical SAM enzymes"/>
    <property type="match status" value="1"/>
</dbReference>
<dbReference type="PROSITE" id="PS51918">
    <property type="entry name" value="RADICAL_SAM"/>
    <property type="match status" value="1"/>
</dbReference>
<comment type="function">
    <text evidence="1">Specifically methylates position 2 of adenine 2503 in 23S rRNA and position 2 of adenine 37 in tRNAs.</text>
</comment>
<comment type="catalytic activity">
    <reaction evidence="1">
        <text>adenosine(2503) in 23S rRNA + 2 reduced [2Fe-2S]-[ferredoxin] + 2 S-adenosyl-L-methionine = 2-methyladenosine(2503) in 23S rRNA + 5'-deoxyadenosine + L-methionine + 2 oxidized [2Fe-2S]-[ferredoxin] + S-adenosyl-L-homocysteine</text>
        <dbReference type="Rhea" id="RHEA:42916"/>
        <dbReference type="Rhea" id="RHEA-COMP:10000"/>
        <dbReference type="Rhea" id="RHEA-COMP:10001"/>
        <dbReference type="Rhea" id="RHEA-COMP:10152"/>
        <dbReference type="Rhea" id="RHEA-COMP:10282"/>
        <dbReference type="ChEBI" id="CHEBI:17319"/>
        <dbReference type="ChEBI" id="CHEBI:33737"/>
        <dbReference type="ChEBI" id="CHEBI:33738"/>
        <dbReference type="ChEBI" id="CHEBI:57844"/>
        <dbReference type="ChEBI" id="CHEBI:57856"/>
        <dbReference type="ChEBI" id="CHEBI:59789"/>
        <dbReference type="ChEBI" id="CHEBI:74411"/>
        <dbReference type="ChEBI" id="CHEBI:74497"/>
        <dbReference type="EC" id="2.1.1.192"/>
    </reaction>
</comment>
<comment type="catalytic activity">
    <reaction evidence="1">
        <text>adenosine(37) in tRNA + 2 reduced [2Fe-2S]-[ferredoxin] + 2 S-adenosyl-L-methionine = 2-methyladenosine(37) in tRNA + 5'-deoxyadenosine + L-methionine + 2 oxidized [2Fe-2S]-[ferredoxin] + S-adenosyl-L-homocysteine</text>
        <dbReference type="Rhea" id="RHEA:43332"/>
        <dbReference type="Rhea" id="RHEA-COMP:10000"/>
        <dbReference type="Rhea" id="RHEA-COMP:10001"/>
        <dbReference type="Rhea" id="RHEA-COMP:10162"/>
        <dbReference type="Rhea" id="RHEA-COMP:10485"/>
        <dbReference type="ChEBI" id="CHEBI:17319"/>
        <dbReference type="ChEBI" id="CHEBI:33737"/>
        <dbReference type="ChEBI" id="CHEBI:33738"/>
        <dbReference type="ChEBI" id="CHEBI:57844"/>
        <dbReference type="ChEBI" id="CHEBI:57856"/>
        <dbReference type="ChEBI" id="CHEBI:59789"/>
        <dbReference type="ChEBI" id="CHEBI:74411"/>
        <dbReference type="ChEBI" id="CHEBI:74497"/>
        <dbReference type="EC" id="2.1.1.192"/>
    </reaction>
</comment>
<comment type="cofactor">
    <cofactor evidence="1">
        <name>[4Fe-4S] cluster</name>
        <dbReference type="ChEBI" id="CHEBI:49883"/>
    </cofactor>
    <text evidence="1">Binds 1 [4Fe-4S] cluster. The cluster is coordinated with 3 cysteines and an exchangeable S-adenosyl-L-methionine.</text>
</comment>
<comment type="subcellular location">
    <subcellularLocation>
        <location evidence="1">Cytoplasm</location>
    </subcellularLocation>
</comment>
<comment type="miscellaneous">
    <text evidence="1">Reaction proceeds by a ping-pong mechanism involving intermediate methylation of a conserved cysteine residue.</text>
</comment>
<comment type="similarity">
    <text evidence="1">Belongs to the radical SAM superfamily. RlmN family.</text>
</comment>
<name>RLMN_GEOKA</name>
<reference key="1">
    <citation type="journal article" date="2004" name="Nucleic Acids Res.">
        <title>Thermoadaptation trait revealed by the genome sequence of thermophilic Geobacillus kaustophilus.</title>
        <authorList>
            <person name="Takami H."/>
            <person name="Takaki Y."/>
            <person name="Chee G.-J."/>
            <person name="Nishi S."/>
            <person name="Shimamura S."/>
            <person name="Suzuki H."/>
            <person name="Matsui S."/>
            <person name="Uchiyama I."/>
        </authorList>
    </citation>
    <scope>NUCLEOTIDE SEQUENCE [LARGE SCALE GENOMIC DNA]</scope>
    <source>
        <strain>HTA426</strain>
    </source>
</reference>
<proteinExistence type="inferred from homology"/>
<organism>
    <name type="scientific">Geobacillus kaustophilus (strain HTA426)</name>
    <dbReference type="NCBI Taxonomy" id="235909"/>
    <lineage>
        <taxon>Bacteria</taxon>
        <taxon>Bacillati</taxon>
        <taxon>Bacillota</taxon>
        <taxon>Bacilli</taxon>
        <taxon>Bacillales</taxon>
        <taxon>Anoxybacillaceae</taxon>
        <taxon>Geobacillus</taxon>
        <taxon>Geobacillus thermoleovorans group</taxon>
    </lineage>
</organism>
<feature type="chain" id="PRO_0000350192" description="Probable dual-specificity RNA methyltransferase RlmN">
    <location>
        <begin position="1"/>
        <end position="365"/>
    </location>
</feature>
<feature type="domain" description="Radical SAM core" evidence="2">
    <location>
        <begin position="114"/>
        <end position="347"/>
    </location>
</feature>
<feature type="active site" description="Proton acceptor" evidence="1">
    <location>
        <position position="108"/>
    </location>
</feature>
<feature type="active site" description="S-methylcysteine intermediate" evidence="1">
    <location>
        <position position="352"/>
    </location>
</feature>
<feature type="binding site" evidence="1">
    <location>
        <position position="128"/>
    </location>
    <ligand>
        <name>[4Fe-4S] cluster</name>
        <dbReference type="ChEBI" id="CHEBI:49883"/>
        <note>4Fe-4S-S-AdoMet</note>
    </ligand>
</feature>
<feature type="binding site" evidence="1">
    <location>
        <position position="132"/>
    </location>
    <ligand>
        <name>[4Fe-4S] cluster</name>
        <dbReference type="ChEBI" id="CHEBI:49883"/>
        <note>4Fe-4S-S-AdoMet</note>
    </ligand>
</feature>
<feature type="binding site" evidence="1">
    <location>
        <position position="135"/>
    </location>
    <ligand>
        <name>[4Fe-4S] cluster</name>
        <dbReference type="ChEBI" id="CHEBI:49883"/>
        <note>4Fe-4S-S-AdoMet</note>
    </ligand>
</feature>
<feature type="binding site" evidence="1">
    <location>
        <begin position="178"/>
        <end position="179"/>
    </location>
    <ligand>
        <name>S-adenosyl-L-methionine</name>
        <dbReference type="ChEBI" id="CHEBI:59789"/>
    </ligand>
</feature>
<feature type="binding site" evidence="1">
    <location>
        <position position="210"/>
    </location>
    <ligand>
        <name>S-adenosyl-L-methionine</name>
        <dbReference type="ChEBI" id="CHEBI:59789"/>
    </ligand>
</feature>
<feature type="binding site" evidence="1">
    <location>
        <begin position="233"/>
        <end position="235"/>
    </location>
    <ligand>
        <name>S-adenosyl-L-methionine</name>
        <dbReference type="ChEBI" id="CHEBI:59789"/>
    </ligand>
</feature>
<feature type="binding site" evidence="1">
    <location>
        <position position="309"/>
    </location>
    <ligand>
        <name>S-adenosyl-L-methionine</name>
        <dbReference type="ChEBI" id="CHEBI:59789"/>
    </ligand>
</feature>
<feature type="disulfide bond" description="(transient)" evidence="1">
    <location>
        <begin position="121"/>
        <end position="352"/>
    </location>
</feature>